<sequence>MGDSTKKAETAKDVGTSQEKREARPLPTAADFEGKDTSEDTDGRAADADGEMSLERRLDSLREFLRERRGAIRVTNPGLETGRPRLQLAENMRPDPTNPYNRPSIEALSRIKPIAISNNMATSEDMMRIYVNLEGLGVPTEHVQQVVIQAVLFCKDASSSVFLDPRGSFEWPRGAITADAVLAVLKKDAETLRRVCRLYAPVTWNHMLTHNAPPAEWAAMGFQYEDRFAPFDCFDYVENTAAVQPLEGLIRRPTPREKVAHNTHKDIALRGANRNQVFSSLNAEVTGGMNGPELTRDYVKSNRK</sequence>
<dbReference type="EMBL" id="X57440">
    <property type="protein sequence ID" value="CAA40688.1"/>
    <property type="molecule type" value="Genomic_RNA"/>
</dbReference>
<dbReference type="PIR" id="S12975">
    <property type="entry name" value="S12975"/>
</dbReference>
<dbReference type="SMR" id="Q01669"/>
<dbReference type="GO" id="GO:0019029">
    <property type="term" value="C:helical viral capsid"/>
    <property type="evidence" value="ECO:0007669"/>
    <property type="project" value="UniProtKB-KW"/>
</dbReference>
<dbReference type="GO" id="GO:1990904">
    <property type="term" value="C:ribonucleoprotein complex"/>
    <property type="evidence" value="ECO:0007669"/>
    <property type="project" value="UniProtKB-KW"/>
</dbReference>
<dbReference type="GO" id="GO:0005198">
    <property type="term" value="F:structural molecule activity"/>
    <property type="evidence" value="ECO:0007669"/>
    <property type="project" value="InterPro"/>
</dbReference>
<dbReference type="InterPro" id="IPR013569">
    <property type="entry name" value="Carlavirus_coat_N"/>
</dbReference>
<dbReference type="InterPro" id="IPR000052">
    <property type="entry name" value="Pltvir_coat"/>
</dbReference>
<dbReference type="Pfam" id="PF00286">
    <property type="entry name" value="Flexi_CP"/>
    <property type="match status" value="1"/>
</dbReference>
<dbReference type="Pfam" id="PF08358">
    <property type="entry name" value="Flexi_CP_N"/>
    <property type="match status" value="1"/>
</dbReference>
<dbReference type="PRINTS" id="PR00232">
    <property type="entry name" value="POTXCARLCOAT"/>
</dbReference>
<dbReference type="PROSITE" id="PS00418">
    <property type="entry name" value="POTEX_CARLAVIRUS_COAT"/>
    <property type="match status" value="1"/>
</dbReference>
<name>CAPSD_PVMG</name>
<organism>
    <name type="scientific">Potato virus M (strain German)</name>
    <name type="common">PVM</name>
    <dbReference type="NCBI Taxonomy" id="31710"/>
    <lineage>
        <taxon>Viruses</taxon>
        <taxon>Riboviria</taxon>
        <taxon>Orthornavirae</taxon>
        <taxon>Kitrinoviricota</taxon>
        <taxon>Alsuviricetes</taxon>
        <taxon>Tymovirales</taxon>
        <taxon>Betaflexiviridae</taxon>
        <taxon>Quinvirinae</taxon>
        <taxon>Carlavirus</taxon>
        <taxon>Potato virus M</taxon>
    </lineage>
</organism>
<comment type="function">
    <text>Required for genome encapsidation. Forms ribonucleoprotein complexes along with TGB1 helicase and viral RNA.</text>
</comment>
<comment type="subcellular location">
    <subcellularLocation>
        <location evidence="2">Virion</location>
    </subcellularLocation>
</comment>
<comment type="miscellaneous">
    <text>The N- and the C-terminus of this capsid protein may be exposed on the surface of the virus particle. The central core sequence may be important in maintaining correct tertiary structure of the capsid protein and/or play a role in interacting with the viral RNA.</text>
</comment>
<comment type="similarity">
    <text evidence="2">Belongs to the potexviruses coat protein family.</text>
</comment>
<feature type="chain" id="PRO_0000222641" description="Capsid protein">
    <location>
        <begin position="1"/>
        <end position="304"/>
    </location>
</feature>
<feature type="region of interest" description="Disordered" evidence="1">
    <location>
        <begin position="1"/>
        <end position="54"/>
    </location>
</feature>
<feature type="compositionally biased region" description="Basic and acidic residues" evidence="1">
    <location>
        <begin position="1"/>
        <end position="24"/>
    </location>
</feature>
<feature type="compositionally biased region" description="Basic and acidic residues" evidence="1">
    <location>
        <begin position="32"/>
        <end position="54"/>
    </location>
</feature>
<reference key="1">
    <citation type="journal article" date="1990" name="FEBS Lett.">
        <title>The 12 kDa protein of potato virus M displays properties of a nucleic acid-binding regulatory protein.</title>
        <authorList>
            <person name="Gramstat A."/>
            <person name="Courtpozanis A."/>
            <person name="Rohde W."/>
        </authorList>
    </citation>
    <scope>NUCLEOTIDE SEQUENCE [GENOMIC RNA]</scope>
</reference>
<reference key="2">
    <citation type="journal article" date="2005" name="Mol. Plant Microbe Interact.">
        <title>A new cell-to-cell transport model for Potexviruses.</title>
        <authorList>
            <person name="Verchot-Lubicz J."/>
        </authorList>
    </citation>
    <scope>REVIEW</scope>
</reference>
<evidence type="ECO:0000256" key="1">
    <source>
        <dbReference type="SAM" id="MobiDB-lite"/>
    </source>
</evidence>
<evidence type="ECO:0000305" key="2"/>
<proteinExistence type="inferred from homology"/>
<accession>Q01669</accession>
<keyword id="KW-0167">Capsid protein</keyword>
<keyword id="KW-1139">Helical capsid protein</keyword>
<keyword id="KW-0687">Ribonucleoprotein</keyword>
<keyword id="KW-0946">Virion</keyword>
<protein>
    <recommendedName>
        <fullName>Capsid protein</fullName>
    </recommendedName>
    <alternativeName>
        <fullName>Coat protein</fullName>
        <shortName>CP</shortName>
    </alternativeName>
</protein>
<organismHost>
    <name type="scientific">Solanum tuberosum</name>
    <name type="common">Potato</name>
    <dbReference type="NCBI Taxonomy" id="4113"/>
</organismHost>